<dbReference type="EMBL" id="AB036058">
    <property type="protein sequence ID" value="BAA92531.1"/>
    <property type="molecule type" value="mRNA"/>
</dbReference>
<dbReference type="EMBL" id="AK041474">
    <property type="protein sequence ID" value="BAC30953.1"/>
    <property type="molecule type" value="mRNA"/>
</dbReference>
<dbReference type="EMBL" id="AK162655">
    <property type="protein sequence ID" value="BAE37007.1"/>
    <property type="molecule type" value="mRNA"/>
</dbReference>
<dbReference type="EMBL" id="BC057898">
    <property type="protein sequence ID" value="AAH57898.1"/>
    <property type="molecule type" value="mRNA"/>
</dbReference>
<dbReference type="EMBL" id="BC145828">
    <property type="protein sequence ID" value="AAI45829.1"/>
    <property type="molecule type" value="mRNA"/>
</dbReference>
<dbReference type="EMBL" id="BC145830">
    <property type="protein sequence ID" value="AAI45831.1"/>
    <property type="molecule type" value="mRNA"/>
</dbReference>
<dbReference type="CCDS" id="CCDS19377.1">
    <molecule id="Q9JM90-1"/>
</dbReference>
<dbReference type="RefSeq" id="NP_001297568.1">
    <property type="nucleotide sequence ID" value="NM_001310639.1"/>
</dbReference>
<dbReference type="RefSeq" id="NP_064376.1">
    <molecule id="Q9JM90-1"/>
    <property type="nucleotide sequence ID" value="NM_019992.4"/>
</dbReference>
<dbReference type="RefSeq" id="XP_006535224.1">
    <property type="nucleotide sequence ID" value="XM_006535161.3"/>
</dbReference>
<dbReference type="RefSeq" id="XP_036021253.1">
    <molecule id="Q9JM90-2"/>
    <property type="nucleotide sequence ID" value="XM_036165360.1"/>
</dbReference>
<dbReference type="SMR" id="Q9JM90"/>
<dbReference type="BioGRID" id="208177">
    <property type="interactions" value="7"/>
</dbReference>
<dbReference type="FunCoup" id="Q9JM90">
    <property type="interactions" value="1100"/>
</dbReference>
<dbReference type="STRING" id="10090.ENSMUSP00000143251"/>
<dbReference type="iPTMnet" id="Q9JM90"/>
<dbReference type="PhosphoSitePlus" id="Q9JM90"/>
<dbReference type="SwissPalm" id="Q9JM90"/>
<dbReference type="PaxDb" id="10090-ENSMUSP00000031171"/>
<dbReference type="PeptideAtlas" id="Q9JM90"/>
<dbReference type="ProteomicsDB" id="258748">
    <molecule id="Q9JM90-1"/>
</dbReference>
<dbReference type="ProteomicsDB" id="258749">
    <molecule id="Q9JM90-2"/>
</dbReference>
<dbReference type="Antibodypedia" id="24136">
    <property type="antibodies" value="215 antibodies from 21 providers"/>
</dbReference>
<dbReference type="DNASU" id="56792"/>
<dbReference type="Ensembl" id="ENSMUST00000198435.5">
    <molecule id="Q9JM90-1"/>
    <property type="protein sequence ID" value="ENSMUSP00000143251.2"/>
    <property type="gene ID" value="ENSMUSG00000029254.17"/>
</dbReference>
<dbReference type="GeneID" id="56792"/>
<dbReference type="KEGG" id="mmu:56792"/>
<dbReference type="UCSC" id="uc008xxf.1">
    <molecule id="Q9JM90-2"/>
    <property type="organism name" value="mouse"/>
</dbReference>
<dbReference type="UCSC" id="uc008xxg.1">
    <molecule id="Q9JM90-1"/>
    <property type="organism name" value="mouse"/>
</dbReference>
<dbReference type="AGR" id="MGI:1926193"/>
<dbReference type="CTD" id="26228"/>
<dbReference type="MGI" id="MGI:1926193">
    <property type="gene designation" value="Stap1"/>
</dbReference>
<dbReference type="VEuPathDB" id="HostDB:ENSMUSG00000029254"/>
<dbReference type="eggNOG" id="ENOG502RZ9C">
    <property type="taxonomic scope" value="Eukaryota"/>
</dbReference>
<dbReference type="GeneTree" id="ENSGT00530000063841"/>
<dbReference type="HOGENOM" id="CLU_043957_1_0_1"/>
<dbReference type="InParanoid" id="Q9JM90"/>
<dbReference type="OMA" id="PLYFQGY"/>
<dbReference type="OrthoDB" id="6086001at2759"/>
<dbReference type="PhylomeDB" id="Q9JM90"/>
<dbReference type="TreeFam" id="TF332087"/>
<dbReference type="BioGRID-ORCS" id="56792">
    <property type="hits" value="2 hits in 78 CRISPR screens"/>
</dbReference>
<dbReference type="ChiTaRS" id="Stap1">
    <property type="organism name" value="mouse"/>
</dbReference>
<dbReference type="PRO" id="PR:Q9JM90"/>
<dbReference type="Proteomes" id="UP000000589">
    <property type="component" value="Chromosome 5"/>
</dbReference>
<dbReference type="RNAct" id="Q9JM90">
    <property type="molecule type" value="protein"/>
</dbReference>
<dbReference type="Bgee" id="ENSMUSG00000029254">
    <property type="expression patterns" value="Expressed in granulocyte and 74 other cell types or tissues"/>
</dbReference>
<dbReference type="ExpressionAtlas" id="Q9JM90">
    <property type="expression patterns" value="baseline and differential"/>
</dbReference>
<dbReference type="GO" id="GO:0005829">
    <property type="term" value="C:cytosol"/>
    <property type="evidence" value="ECO:0007669"/>
    <property type="project" value="Ensembl"/>
</dbReference>
<dbReference type="GO" id="GO:0005739">
    <property type="term" value="C:mitochondrion"/>
    <property type="evidence" value="ECO:0007669"/>
    <property type="project" value="UniProtKB-SubCell"/>
</dbReference>
<dbReference type="GO" id="GO:0016604">
    <property type="term" value="C:nuclear body"/>
    <property type="evidence" value="ECO:0007669"/>
    <property type="project" value="Ensembl"/>
</dbReference>
<dbReference type="GO" id="GO:0032991">
    <property type="term" value="C:protein-containing complex"/>
    <property type="evidence" value="ECO:0000266"/>
    <property type="project" value="MGI"/>
</dbReference>
<dbReference type="GO" id="GO:0005157">
    <property type="term" value="F:macrophage colony-stimulating factor receptor binding"/>
    <property type="evidence" value="ECO:0000353"/>
    <property type="project" value="BHF-UCL"/>
</dbReference>
<dbReference type="GO" id="GO:0001784">
    <property type="term" value="F:phosphotyrosine residue binding"/>
    <property type="evidence" value="ECO:0007669"/>
    <property type="project" value="Ensembl"/>
</dbReference>
<dbReference type="GO" id="GO:0030296">
    <property type="term" value="F:protein tyrosine kinase activator activity"/>
    <property type="evidence" value="ECO:0007669"/>
    <property type="project" value="Ensembl"/>
</dbReference>
<dbReference type="GO" id="GO:0030674">
    <property type="term" value="F:protein-macromolecule adaptor activity"/>
    <property type="evidence" value="ECO:0000314"/>
    <property type="project" value="MGI"/>
</dbReference>
<dbReference type="GO" id="GO:0030971">
    <property type="term" value="F:receptor tyrosine kinase binding"/>
    <property type="evidence" value="ECO:0000353"/>
    <property type="project" value="BHF-UCL"/>
</dbReference>
<dbReference type="GO" id="GO:0005068">
    <property type="term" value="F:transmembrane receptor protein tyrosine kinase adaptor activity"/>
    <property type="evidence" value="ECO:0000314"/>
    <property type="project" value="BHF-UCL"/>
</dbReference>
<dbReference type="GO" id="GO:0007169">
    <property type="term" value="P:cell surface receptor protein tyrosine kinase signaling pathway"/>
    <property type="evidence" value="ECO:0000314"/>
    <property type="project" value="BHF-UCL"/>
</dbReference>
<dbReference type="GO" id="GO:0071222">
    <property type="term" value="P:cellular response to lipopolysaccharide"/>
    <property type="evidence" value="ECO:0000314"/>
    <property type="project" value="BHF-UCL"/>
</dbReference>
<dbReference type="GO" id="GO:0030099">
    <property type="term" value="P:myeloid cell differentiation"/>
    <property type="evidence" value="ECO:0000304"/>
    <property type="project" value="MGI"/>
</dbReference>
<dbReference type="GO" id="GO:0010760">
    <property type="term" value="P:negative regulation of macrophage chemotaxis"/>
    <property type="evidence" value="ECO:0000315"/>
    <property type="project" value="BHF-UCL"/>
</dbReference>
<dbReference type="GO" id="GO:1902227">
    <property type="term" value="P:negative regulation of macrophage colony-stimulating factor signaling pathway"/>
    <property type="evidence" value="ECO:0000315"/>
    <property type="project" value="BHF-UCL"/>
</dbReference>
<dbReference type="GO" id="GO:1904140">
    <property type="term" value="P:negative regulation of microglial cell migration"/>
    <property type="evidence" value="ECO:0000315"/>
    <property type="project" value="BHF-UCL"/>
</dbReference>
<dbReference type="GO" id="GO:1900028">
    <property type="term" value="P:negative regulation of ruffle assembly"/>
    <property type="evidence" value="ECO:0000315"/>
    <property type="project" value="BHF-UCL"/>
</dbReference>
<dbReference type="GO" id="GO:0050861">
    <property type="term" value="P:positive regulation of B cell receptor signaling pathway"/>
    <property type="evidence" value="ECO:0007669"/>
    <property type="project" value="Ensembl"/>
</dbReference>
<dbReference type="GO" id="GO:0010628">
    <property type="term" value="P:positive regulation of gene expression"/>
    <property type="evidence" value="ECO:0000314"/>
    <property type="project" value="BHF-UCL"/>
</dbReference>
<dbReference type="GO" id="GO:1903980">
    <property type="term" value="P:positive regulation of microglial cell activation"/>
    <property type="evidence" value="ECO:0000315"/>
    <property type="project" value="BHF-UCL"/>
</dbReference>
<dbReference type="GO" id="GO:1904151">
    <property type="term" value="P:positive regulation of microglial cell mediated cytotoxicity"/>
    <property type="evidence" value="ECO:0000314"/>
    <property type="project" value="BHF-UCL"/>
</dbReference>
<dbReference type="GO" id="GO:0060100">
    <property type="term" value="P:positive regulation of phagocytosis, engulfment"/>
    <property type="evidence" value="ECO:0000314"/>
    <property type="project" value="BHF-UCL"/>
</dbReference>
<dbReference type="GO" id="GO:0009617">
    <property type="term" value="P:response to bacterium"/>
    <property type="evidence" value="ECO:0000270"/>
    <property type="project" value="MGI"/>
</dbReference>
<dbReference type="CDD" id="cd10403">
    <property type="entry name" value="SH2_STAP1"/>
    <property type="match status" value="1"/>
</dbReference>
<dbReference type="Gene3D" id="2.30.29.30">
    <property type="entry name" value="Pleckstrin-homology domain (PH domain)/Phosphotyrosine-binding domain (PTB)"/>
    <property type="match status" value="1"/>
</dbReference>
<dbReference type="Gene3D" id="3.30.505.10">
    <property type="entry name" value="SH2 domain"/>
    <property type="match status" value="1"/>
</dbReference>
<dbReference type="InterPro" id="IPR011993">
    <property type="entry name" value="PH-like_dom_sf"/>
</dbReference>
<dbReference type="InterPro" id="IPR001849">
    <property type="entry name" value="PH_domain"/>
</dbReference>
<dbReference type="InterPro" id="IPR000980">
    <property type="entry name" value="SH2"/>
</dbReference>
<dbReference type="InterPro" id="IPR036860">
    <property type="entry name" value="SH2_dom_sf"/>
</dbReference>
<dbReference type="InterPro" id="IPR039111">
    <property type="entry name" value="STAP1/STAP2"/>
</dbReference>
<dbReference type="InterPro" id="IPR035877">
    <property type="entry name" value="STAP1_SH2"/>
</dbReference>
<dbReference type="PANTHER" id="PTHR16186:SF10">
    <property type="entry name" value="SIGNAL-TRANSDUCING ADAPTOR PROTEIN 1"/>
    <property type="match status" value="1"/>
</dbReference>
<dbReference type="PANTHER" id="PTHR16186">
    <property type="entry name" value="SIGNAL-TRANSDUCING ADAPTOR PROTEIN-RELATED"/>
    <property type="match status" value="1"/>
</dbReference>
<dbReference type="Pfam" id="PF00169">
    <property type="entry name" value="PH"/>
    <property type="match status" value="1"/>
</dbReference>
<dbReference type="Pfam" id="PF00017">
    <property type="entry name" value="SH2"/>
    <property type="match status" value="1"/>
</dbReference>
<dbReference type="SMART" id="SM00233">
    <property type="entry name" value="PH"/>
    <property type="match status" value="1"/>
</dbReference>
<dbReference type="SMART" id="SM00252">
    <property type="entry name" value="SH2"/>
    <property type="match status" value="1"/>
</dbReference>
<dbReference type="SUPFAM" id="SSF50729">
    <property type="entry name" value="PH domain-like"/>
    <property type="match status" value="1"/>
</dbReference>
<dbReference type="SUPFAM" id="SSF55550">
    <property type="entry name" value="SH2 domain"/>
    <property type="match status" value="1"/>
</dbReference>
<dbReference type="PROSITE" id="PS50003">
    <property type="entry name" value="PH_DOMAIN"/>
    <property type="match status" value="1"/>
</dbReference>
<dbReference type="PROSITE" id="PS50001">
    <property type="entry name" value="SH2"/>
    <property type="match status" value="1"/>
</dbReference>
<accession>Q9JM90</accession>
<accession>A6H6C6</accession>
<accession>Q3TRM1</accession>
<accession>Q6PES6</accession>
<name>STAP1_MOUSE</name>
<organism>
    <name type="scientific">Mus musculus</name>
    <name type="common">Mouse</name>
    <dbReference type="NCBI Taxonomy" id="10090"/>
    <lineage>
        <taxon>Eukaryota</taxon>
        <taxon>Metazoa</taxon>
        <taxon>Chordata</taxon>
        <taxon>Craniata</taxon>
        <taxon>Vertebrata</taxon>
        <taxon>Euteleostomi</taxon>
        <taxon>Mammalia</taxon>
        <taxon>Eutheria</taxon>
        <taxon>Euarchontoglires</taxon>
        <taxon>Glires</taxon>
        <taxon>Rodentia</taxon>
        <taxon>Myomorpha</taxon>
        <taxon>Muroidea</taxon>
        <taxon>Muridae</taxon>
        <taxon>Murinae</taxon>
        <taxon>Mus</taxon>
        <taxon>Mus</taxon>
    </lineage>
</organism>
<sequence>MMAKKPPKPAPRRIFQERLKITALPLYFEGFLLVKRSDHQEYKHYWTELRGTTLFFYTDKKSTIYVGKLDIIDLVCLTGQHSTEKNCAKFTLVLPKEEVHVKTENTESGEEWRGFILTVTELTVPQHVSLLPGQVIRLHEVLEREKKRRIETDQLPLMPPEKEKEPVQDYADVLNPLPECFYAVSRKEATAMLEKNPSWGNMILRPGSDSKNYSITIRQEIEMPRIKHFKVTRTGNNYTIELEKPVTLPNLFSVIDYFVKETRGNLRPFIHSADDNFGQDPNIEDRSEKFKKNPHNA</sequence>
<evidence type="ECO:0000250" key="1"/>
<evidence type="ECO:0000255" key="2">
    <source>
        <dbReference type="PROSITE-ProRule" id="PRU00145"/>
    </source>
</evidence>
<evidence type="ECO:0000255" key="3">
    <source>
        <dbReference type="PROSITE-ProRule" id="PRU00191"/>
    </source>
</evidence>
<evidence type="ECO:0000256" key="4">
    <source>
        <dbReference type="SAM" id="MobiDB-lite"/>
    </source>
</evidence>
<evidence type="ECO:0000269" key="5">
    <source>
    </source>
</evidence>
<evidence type="ECO:0000303" key="6">
    <source>
    </source>
</evidence>
<evidence type="ECO:0000305" key="7"/>
<evidence type="ECO:0007744" key="8">
    <source>
    </source>
</evidence>
<proteinExistence type="evidence at protein level"/>
<feature type="chain" id="PRO_0000072238" description="Signal-transducing adaptor protein 1">
    <location>
        <begin position="1"/>
        <end position="297"/>
    </location>
</feature>
<feature type="domain" description="PH" evidence="2">
    <location>
        <begin position="25"/>
        <end position="121"/>
    </location>
</feature>
<feature type="domain" description="SH2" evidence="3">
    <location>
        <begin position="179"/>
        <end position="273"/>
    </location>
</feature>
<feature type="region of interest" description="Disordered" evidence="4">
    <location>
        <begin position="271"/>
        <end position="297"/>
    </location>
</feature>
<feature type="modified residue" description="Phosphotyrosine" evidence="8">
    <location>
        <position position="170"/>
    </location>
</feature>
<feature type="splice variant" id="VSP_013399" description="In isoform 2." evidence="6">
    <original>LTVPQH</original>
    <variation>VIRFPL</variation>
    <location>
        <begin position="122"/>
        <end position="127"/>
    </location>
</feature>
<feature type="splice variant" id="VSP_013400" description="In isoform 2." evidence="6">
    <location>
        <begin position="128"/>
        <end position="297"/>
    </location>
</feature>
<keyword id="KW-0025">Alternative splicing</keyword>
<keyword id="KW-0963">Cytoplasm</keyword>
<keyword id="KW-0496">Mitochondrion</keyword>
<keyword id="KW-0539">Nucleus</keyword>
<keyword id="KW-0597">Phosphoprotein</keyword>
<keyword id="KW-1185">Reference proteome</keyword>
<keyword id="KW-0727">SH2 domain</keyword>
<protein>
    <recommendedName>
        <fullName>Signal-transducing adaptor protein 1</fullName>
        <shortName>STAP-1</shortName>
    </recommendedName>
    <alternativeName>
        <fullName>Stem cell adaptor protein 1</fullName>
    </alternativeName>
</protein>
<gene>
    <name type="primary">Stap1</name>
</gene>
<reference key="1">
    <citation type="journal article" date="2000" name="Biochem. Biophys. Res. Commun.">
        <title>Molecular cloning of murine STAP-1, the stem-cell-specific adaptor protein containing PH and SH2 domains.</title>
        <authorList>
            <person name="Masuhara M."/>
            <person name="Nagao K."/>
            <person name="Nishikawa M."/>
            <person name="Sasaki M."/>
            <person name="Yoshimura A."/>
            <person name="Osawa M."/>
        </authorList>
    </citation>
    <scope>NUCLEOTIDE SEQUENCE [MRNA] (ISOFORM 1)</scope>
    <scope>FUNCTION</scope>
    <scope>PHOSPHORYLATION</scope>
    <scope>INTERACTION WITH KIT AND CSF1R</scope>
    <scope>TISSUE SPECIFICITY</scope>
</reference>
<reference key="2">
    <citation type="journal article" date="2005" name="Science">
        <title>The transcriptional landscape of the mammalian genome.</title>
        <authorList>
            <person name="Carninci P."/>
            <person name="Kasukawa T."/>
            <person name="Katayama S."/>
            <person name="Gough J."/>
            <person name="Frith M.C."/>
            <person name="Maeda N."/>
            <person name="Oyama R."/>
            <person name="Ravasi T."/>
            <person name="Lenhard B."/>
            <person name="Wells C."/>
            <person name="Kodzius R."/>
            <person name="Shimokawa K."/>
            <person name="Bajic V.B."/>
            <person name="Brenner S.E."/>
            <person name="Batalov S."/>
            <person name="Forrest A.R."/>
            <person name="Zavolan M."/>
            <person name="Davis M.J."/>
            <person name="Wilming L.G."/>
            <person name="Aidinis V."/>
            <person name="Allen J.E."/>
            <person name="Ambesi-Impiombato A."/>
            <person name="Apweiler R."/>
            <person name="Aturaliya R.N."/>
            <person name="Bailey T.L."/>
            <person name="Bansal M."/>
            <person name="Baxter L."/>
            <person name="Beisel K.W."/>
            <person name="Bersano T."/>
            <person name="Bono H."/>
            <person name="Chalk A.M."/>
            <person name="Chiu K.P."/>
            <person name="Choudhary V."/>
            <person name="Christoffels A."/>
            <person name="Clutterbuck D.R."/>
            <person name="Crowe M.L."/>
            <person name="Dalla E."/>
            <person name="Dalrymple B.P."/>
            <person name="de Bono B."/>
            <person name="Della Gatta G."/>
            <person name="di Bernardo D."/>
            <person name="Down T."/>
            <person name="Engstrom P."/>
            <person name="Fagiolini M."/>
            <person name="Faulkner G."/>
            <person name="Fletcher C.F."/>
            <person name="Fukushima T."/>
            <person name="Furuno M."/>
            <person name="Futaki S."/>
            <person name="Gariboldi M."/>
            <person name="Georgii-Hemming P."/>
            <person name="Gingeras T.R."/>
            <person name="Gojobori T."/>
            <person name="Green R.E."/>
            <person name="Gustincich S."/>
            <person name="Harbers M."/>
            <person name="Hayashi Y."/>
            <person name="Hensch T.K."/>
            <person name="Hirokawa N."/>
            <person name="Hill D."/>
            <person name="Huminiecki L."/>
            <person name="Iacono M."/>
            <person name="Ikeo K."/>
            <person name="Iwama A."/>
            <person name="Ishikawa T."/>
            <person name="Jakt M."/>
            <person name="Kanapin A."/>
            <person name="Katoh M."/>
            <person name="Kawasawa Y."/>
            <person name="Kelso J."/>
            <person name="Kitamura H."/>
            <person name="Kitano H."/>
            <person name="Kollias G."/>
            <person name="Krishnan S.P."/>
            <person name="Kruger A."/>
            <person name="Kummerfeld S.K."/>
            <person name="Kurochkin I.V."/>
            <person name="Lareau L.F."/>
            <person name="Lazarevic D."/>
            <person name="Lipovich L."/>
            <person name="Liu J."/>
            <person name="Liuni S."/>
            <person name="McWilliam S."/>
            <person name="Madan Babu M."/>
            <person name="Madera M."/>
            <person name="Marchionni L."/>
            <person name="Matsuda H."/>
            <person name="Matsuzawa S."/>
            <person name="Miki H."/>
            <person name="Mignone F."/>
            <person name="Miyake S."/>
            <person name="Morris K."/>
            <person name="Mottagui-Tabar S."/>
            <person name="Mulder N."/>
            <person name="Nakano N."/>
            <person name="Nakauchi H."/>
            <person name="Ng P."/>
            <person name="Nilsson R."/>
            <person name="Nishiguchi S."/>
            <person name="Nishikawa S."/>
            <person name="Nori F."/>
            <person name="Ohara O."/>
            <person name="Okazaki Y."/>
            <person name="Orlando V."/>
            <person name="Pang K.C."/>
            <person name="Pavan W.J."/>
            <person name="Pavesi G."/>
            <person name="Pesole G."/>
            <person name="Petrovsky N."/>
            <person name="Piazza S."/>
            <person name="Reed J."/>
            <person name="Reid J.F."/>
            <person name="Ring B.Z."/>
            <person name="Ringwald M."/>
            <person name="Rost B."/>
            <person name="Ruan Y."/>
            <person name="Salzberg S.L."/>
            <person name="Sandelin A."/>
            <person name="Schneider C."/>
            <person name="Schoenbach C."/>
            <person name="Sekiguchi K."/>
            <person name="Semple C.A."/>
            <person name="Seno S."/>
            <person name="Sessa L."/>
            <person name="Sheng Y."/>
            <person name="Shibata Y."/>
            <person name="Shimada H."/>
            <person name="Shimada K."/>
            <person name="Silva D."/>
            <person name="Sinclair B."/>
            <person name="Sperling S."/>
            <person name="Stupka E."/>
            <person name="Sugiura K."/>
            <person name="Sultana R."/>
            <person name="Takenaka Y."/>
            <person name="Taki K."/>
            <person name="Tammoja K."/>
            <person name="Tan S.L."/>
            <person name="Tang S."/>
            <person name="Taylor M.S."/>
            <person name="Tegner J."/>
            <person name="Teichmann S.A."/>
            <person name="Ueda H.R."/>
            <person name="van Nimwegen E."/>
            <person name="Verardo R."/>
            <person name="Wei C.L."/>
            <person name="Yagi K."/>
            <person name="Yamanishi H."/>
            <person name="Zabarovsky E."/>
            <person name="Zhu S."/>
            <person name="Zimmer A."/>
            <person name="Hide W."/>
            <person name="Bult C."/>
            <person name="Grimmond S.M."/>
            <person name="Teasdale R.D."/>
            <person name="Liu E.T."/>
            <person name="Brusic V."/>
            <person name="Quackenbush J."/>
            <person name="Wahlestedt C."/>
            <person name="Mattick J.S."/>
            <person name="Hume D.A."/>
            <person name="Kai C."/>
            <person name="Sasaki D."/>
            <person name="Tomaru Y."/>
            <person name="Fukuda S."/>
            <person name="Kanamori-Katayama M."/>
            <person name="Suzuki M."/>
            <person name="Aoki J."/>
            <person name="Arakawa T."/>
            <person name="Iida J."/>
            <person name="Imamura K."/>
            <person name="Itoh M."/>
            <person name="Kato T."/>
            <person name="Kawaji H."/>
            <person name="Kawagashira N."/>
            <person name="Kawashima T."/>
            <person name="Kojima M."/>
            <person name="Kondo S."/>
            <person name="Konno H."/>
            <person name="Nakano K."/>
            <person name="Ninomiya N."/>
            <person name="Nishio T."/>
            <person name="Okada M."/>
            <person name="Plessy C."/>
            <person name="Shibata K."/>
            <person name="Shiraki T."/>
            <person name="Suzuki S."/>
            <person name="Tagami M."/>
            <person name="Waki K."/>
            <person name="Watahiki A."/>
            <person name="Okamura-Oho Y."/>
            <person name="Suzuki H."/>
            <person name="Kawai J."/>
            <person name="Hayashizaki Y."/>
        </authorList>
    </citation>
    <scope>NUCLEOTIDE SEQUENCE [LARGE SCALE MRNA] (ISOFORM 1)</scope>
    <source>
        <strain>C57BL/6J</strain>
        <tissue>Bone</tissue>
        <tissue>Thymus</tissue>
    </source>
</reference>
<reference key="3">
    <citation type="journal article" date="2004" name="Genome Res.">
        <title>The status, quality, and expansion of the NIH full-length cDNA project: the Mammalian Gene Collection (MGC).</title>
        <authorList>
            <consortium name="The MGC Project Team"/>
        </authorList>
    </citation>
    <scope>NUCLEOTIDE SEQUENCE [LARGE SCALE MRNA] (ISOFORMS 1 AND 2)</scope>
    <source>
        <strain>FVB/N</strain>
        <tissue>Brain</tissue>
        <tissue>Mammary gland</tissue>
    </source>
</reference>
<reference key="4">
    <citation type="journal article" date="2007" name="J. Immunol.">
        <title>Quantitative time-resolved phosphoproteomic analysis of mast cell signaling.</title>
        <authorList>
            <person name="Cao L."/>
            <person name="Yu K."/>
            <person name="Banh C."/>
            <person name="Nguyen V."/>
            <person name="Ritz A."/>
            <person name="Raphael B.J."/>
            <person name="Kawakami Y."/>
            <person name="Kawakami T."/>
            <person name="Salomon A.R."/>
        </authorList>
    </citation>
    <scope>PHOSPHORYLATION [LARGE SCALE ANALYSIS] AT TYR-170</scope>
    <scope>IDENTIFICATION BY MASS SPECTROMETRY [LARGE SCALE ANALYSIS]</scope>
    <source>
        <tissue>Mast cell</tissue>
    </source>
</reference>
<reference key="5">
    <citation type="journal article" date="2010" name="Cell">
        <title>A tissue-specific atlas of mouse protein phosphorylation and expression.</title>
        <authorList>
            <person name="Huttlin E.L."/>
            <person name="Jedrychowski M.P."/>
            <person name="Elias J.E."/>
            <person name="Goswami T."/>
            <person name="Rad R."/>
            <person name="Beausoleil S.A."/>
            <person name="Villen J."/>
            <person name="Haas W."/>
            <person name="Sowa M.E."/>
            <person name="Gygi S.P."/>
        </authorList>
    </citation>
    <scope>IDENTIFICATION BY MASS SPECTROMETRY [LARGE SCALE ANALYSIS]</scope>
    <source>
        <tissue>Spleen</tissue>
    </source>
</reference>
<comment type="function">
    <text evidence="5">May function as an adapter molecule downstream of KIT in the proliferation or differentiation of hematopoietic stem cells.</text>
</comment>
<comment type="subunit">
    <text evidence="1 5">Interacts with URI1; the interaction is phosphorylation-dependent occurs in a growth-dependent manner (By similarity). Interacts with KIT and CSF1R.</text>
</comment>
<comment type="subcellular location">
    <subcellularLocation>
        <location evidence="1">Nucleus</location>
    </subcellularLocation>
    <subcellularLocation>
        <location evidence="7">Cytoplasm</location>
    </subcellularLocation>
    <subcellularLocation>
        <location evidence="1">Mitochondrion</location>
    </subcellularLocation>
</comment>
<comment type="alternative products">
    <event type="alternative splicing"/>
    <isoform>
        <id>Q9JM90-1</id>
        <name>1</name>
        <sequence type="displayed"/>
    </isoform>
    <isoform>
        <id>Q9JM90-2</id>
        <name>2</name>
        <sequence type="described" ref="VSP_013399 VSP_013400"/>
    </isoform>
</comment>
<comment type="tissue specificity">
    <text evidence="5">Expression restricted to the bone marrow.</text>
</comment>
<comment type="PTM">
    <text evidence="1">Phosphorylated on tyrosine by TEC. Phosphorylated on tyrosine by KIT.</text>
</comment>